<reference key="1">
    <citation type="journal article" date="2016" name="PLoS Pathog.">
        <title>Biosynthesis of antibiotic leucinostatins in bio-control fungus Purpureocillium lilacinum and their inhibition on phytophthora revealed by genome mining.</title>
        <authorList>
            <person name="Wang G."/>
            <person name="Liu Z."/>
            <person name="Lin R."/>
            <person name="Li E."/>
            <person name="Mao Z."/>
            <person name="Ling J."/>
            <person name="Yang Y."/>
            <person name="Yin W.B."/>
            <person name="Xie B."/>
        </authorList>
    </citation>
    <scope>NUCLEOTIDE SEQUENCE [LARGE SCALE GENOMIC DNA]</scope>
    <scope>IDENTIFICATION</scope>
    <scope>FUNCTION</scope>
    <scope>INDUCTION</scope>
    <source>
        <strain>PLBJ-1</strain>
    </source>
</reference>
<gene>
    <name evidence="7" type="primary">lcsH</name>
    <name type="ORF">VFPBJ_02522</name>
</gene>
<accession>A0A179H0T5</accession>
<evidence type="ECO:0000255" key="1"/>
<evidence type="ECO:0000255" key="2">
    <source>
        <dbReference type="PROSITE-ProRule" id="PRU00434"/>
    </source>
</evidence>
<evidence type="ECO:0000255" key="3">
    <source>
        <dbReference type="PROSITE-ProRule" id="PRU00441"/>
    </source>
</evidence>
<evidence type="ECO:0000255" key="4">
    <source>
        <dbReference type="PROSITE-ProRule" id="PRU00498"/>
    </source>
</evidence>
<evidence type="ECO:0000256" key="5">
    <source>
        <dbReference type="SAM" id="MobiDB-lite"/>
    </source>
</evidence>
<evidence type="ECO:0000269" key="6">
    <source>
    </source>
</evidence>
<evidence type="ECO:0000303" key="7">
    <source>
    </source>
</evidence>
<evidence type="ECO:0000305" key="8"/>
<evidence type="ECO:0000305" key="9">
    <source>
    </source>
</evidence>
<comment type="function">
    <text evidence="6 9">ABC multidrug transporter; part of the gene cluster that mediates the biosynthesis of the lipopeptide antibiotics leucinostatins that show extensive biological activities, including antimalarial, antiviral, antibacterial, antifungal, and antitumor activities, as well as phytotoxic (PubMed:27416025). May be involved in the efflux of leucinostatins (Probable).</text>
</comment>
<comment type="subcellular location">
    <subcellularLocation>
        <location evidence="8">Cell membrane</location>
        <topology evidence="1">Multi-pass membrane protein</topology>
    </subcellularLocation>
</comment>
<comment type="induction">
    <text evidence="6">Expression is positively regulated by the leucinostatins biosynthesis cluster-specific transcription regulator lcsF.</text>
</comment>
<comment type="similarity">
    <text evidence="8">Belongs to the ABC transporter superfamily. ABCC family. Conjugate transporter (TC 3.A.1.208) subfamily.</text>
</comment>
<feature type="chain" id="PRO_0000446611" description="ABC multidrug transporter lscH">
    <location>
        <begin position="1"/>
        <end position="1552"/>
    </location>
</feature>
<feature type="transmembrane region" description="Helical" evidence="1">
    <location>
        <begin position="32"/>
        <end position="52"/>
    </location>
</feature>
<feature type="transmembrane region" description="Helical" evidence="1">
    <location>
        <begin position="68"/>
        <end position="88"/>
    </location>
</feature>
<feature type="transmembrane region" description="Helical" evidence="1">
    <location>
        <begin position="100"/>
        <end position="120"/>
    </location>
</feature>
<feature type="transmembrane region" description="Helical" evidence="1">
    <location>
        <begin position="158"/>
        <end position="178"/>
    </location>
</feature>
<feature type="transmembrane region" description="Helical" evidence="1 3">
    <location>
        <begin position="280"/>
        <end position="300"/>
    </location>
</feature>
<feature type="transmembrane region" description="Helical" evidence="1 3">
    <location>
        <begin position="311"/>
        <end position="331"/>
    </location>
</feature>
<feature type="transmembrane region" description="Helical" evidence="1 3">
    <location>
        <begin position="413"/>
        <end position="433"/>
    </location>
</feature>
<feature type="transmembrane region" description="Helical" evidence="1 3">
    <location>
        <begin position="457"/>
        <end position="477"/>
    </location>
</feature>
<feature type="transmembrane region" description="Helical" evidence="1 3">
    <location>
        <begin position="500"/>
        <end position="520"/>
    </location>
</feature>
<feature type="transmembrane region" description="Helical" evidence="1 3">
    <location>
        <begin position="528"/>
        <end position="548"/>
    </location>
</feature>
<feature type="transmembrane region" description="Helical" evidence="1 3">
    <location>
        <begin position="957"/>
        <end position="977"/>
    </location>
</feature>
<feature type="transmembrane region" description="Helical" evidence="1 3">
    <location>
        <begin position="1005"/>
        <end position="1025"/>
    </location>
</feature>
<feature type="transmembrane region" description="Helical" evidence="1 3">
    <location>
        <begin position="1076"/>
        <end position="1096"/>
    </location>
</feature>
<feature type="transmembrane region" description="Helical" evidence="1 3">
    <location>
        <begin position="1100"/>
        <end position="1120"/>
    </location>
</feature>
<feature type="transmembrane region" description="Helical" evidence="1 3">
    <location>
        <begin position="1184"/>
        <end position="1204"/>
    </location>
</feature>
<feature type="transmembrane region" description="Helical" evidence="1 3">
    <location>
        <begin position="1210"/>
        <end position="1230"/>
    </location>
</feature>
<feature type="domain" description="ABC transmembrane type-1 1" evidence="3">
    <location>
        <begin position="280"/>
        <end position="559"/>
    </location>
</feature>
<feature type="domain" description="ABC transporter 1" evidence="2">
    <location>
        <begin position="639"/>
        <end position="884"/>
    </location>
</feature>
<feature type="domain" description="ABC transmembrane type-1 2" evidence="3">
    <location>
        <begin position="963"/>
        <end position="1241"/>
    </location>
</feature>
<feature type="domain" description="ABC transporter 2" evidence="2">
    <location>
        <begin position="1295"/>
        <end position="1538"/>
    </location>
</feature>
<feature type="region of interest" description="Disordered" evidence="5">
    <location>
        <begin position="573"/>
        <end position="655"/>
    </location>
</feature>
<feature type="region of interest" description="Disordered" evidence="5">
    <location>
        <begin position="887"/>
        <end position="917"/>
    </location>
</feature>
<feature type="compositionally biased region" description="Polar residues" evidence="5">
    <location>
        <begin position="581"/>
        <end position="602"/>
    </location>
</feature>
<feature type="compositionally biased region" description="Basic and acidic residues" evidence="5">
    <location>
        <begin position="887"/>
        <end position="912"/>
    </location>
</feature>
<feature type="binding site" evidence="2">
    <location>
        <begin position="676"/>
        <end position="683"/>
    </location>
    <ligand>
        <name>ATP</name>
        <dbReference type="ChEBI" id="CHEBI:30616"/>
    </ligand>
</feature>
<feature type="binding site" evidence="2">
    <location>
        <begin position="1328"/>
        <end position="1335"/>
    </location>
    <ligand>
        <name>ATP</name>
        <dbReference type="ChEBI" id="CHEBI:30616"/>
    </ligand>
</feature>
<feature type="glycosylation site" description="N-linked (GlcNAc...) asparagine" evidence="4">
    <location>
        <position position="91"/>
    </location>
</feature>
<feature type="glycosylation site" description="N-linked (GlcNAc...) asparagine" evidence="4">
    <location>
        <position position="592"/>
    </location>
</feature>
<feature type="glycosylation site" description="N-linked (GlcNAc...) asparagine" evidence="4">
    <location>
        <position position="719"/>
    </location>
</feature>
<feature type="glycosylation site" description="N-linked (GlcNAc...) asparagine" evidence="4">
    <location>
        <position position="834"/>
    </location>
</feature>
<feature type="glycosylation site" description="N-linked (GlcNAc...) asparagine" evidence="4">
    <location>
        <position position="1028"/>
    </location>
</feature>
<feature type="glycosylation site" description="N-linked (GlcNAc...) asparagine" evidence="4">
    <location>
        <position position="1299"/>
    </location>
</feature>
<feature type="glycosylation site" description="N-linked (GlcNAc...) asparagine" evidence="4">
    <location>
        <position position="1313"/>
    </location>
</feature>
<keyword id="KW-0067">ATP-binding</keyword>
<keyword id="KW-1003">Cell membrane</keyword>
<keyword id="KW-0325">Glycoprotein</keyword>
<keyword id="KW-0472">Membrane</keyword>
<keyword id="KW-0547">Nucleotide-binding</keyword>
<keyword id="KW-0677">Repeat</keyword>
<keyword id="KW-0812">Transmembrane</keyword>
<keyword id="KW-1133">Transmembrane helix</keyword>
<keyword id="KW-0813">Transport</keyword>
<organism>
    <name type="scientific">Purpureocillium lilacinum</name>
    <name type="common">Paecilomyces lilacinus</name>
    <dbReference type="NCBI Taxonomy" id="33203"/>
    <lineage>
        <taxon>Eukaryota</taxon>
        <taxon>Fungi</taxon>
        <taxon>Dikarya</taxon>
        <taxon>Ascomycota</taxon>
        <taxon>Pezizomycotina</taxon>
        <taxon>Sordariomycetes</taxon>
        <taxon>Hypocreomycetidae</taxon>
        <taxon>Hypocreales</taxon>
        <taxon>Ophiocordycipitaceae</taxon>
        <taxon>Purpureocillium</taxon>
    </lineage>
</organism>
<sequence>MSAEAACSDDSFGPWAGATCRGGFDFTLLFEETILSILPSVLVIVVAPIPIIRLAREPPKVRASALDWFKKISSICFITLSAALVGLWARNSTITQTRASTPSAVLTFVLSLVYVLLSTIEHRLSLRPSSVLSFYLGLSVLFDIARTRTLFMLEDATHSAIPPVFASSLALRVVMLLLESTEKRSLLLAKYDNAAPESVGGPYNLGVFYWLSTLFFTGYRKILEIGDLYPLDDELRSTGLAKKMSDAWRKVPDKAAPNVLFATWLKTFSKAMFMPVVPRLFQIGFTYAQPFLITAAIELAATPQTQPYNNNGYGLIGAYILVYSGIAVSVGQYEWRNYRAATMMRGSIIPLVYEKSLILDSCSSATFHPTAALTLVSTDIETITSGLVQIHETWSNLVEIGLAIYLLERQLGAACVMSVGFAIVVMVGTVFLARPTGTHLAAWIQASQVRVIETSKALASIKWLKISGLTDVAFSVIQKLRKQELVVSEKFRYLLGLSLILSICTPILGPLLTFAVFAGIAAHGGSTLTIAKVFTAFSIIVLLNSPLAKIVQALPQISGSIASFQRIQDHLNAEERHDPRSTTTGTSPESNNGSQQTLSDKQATADGDTMISISGKFSWRSETPAPGTGITLVTGSDEGHLADTTPDANGDSRDAPVIDISPRLDIPRGALTLILGPVGCGKSTLLKALLGELSSFDGVIEAKYSGAVTYCDQNPWLPNETVRDIIRGRSATDTSDADSSEKADHDEDWYRVVVSACELQRDMQIWPRGDRTPVGSKGISMSGGQKQRLSIARAVYARRALVILDDVFSGLDANTEDVVFENLLGNSGILRKANMTVVLASSDVRRVPFADKIVLLNQHGQVQHTGTPGDLKQVAELGWADRDLDAQQEKPGKDELNHEHGEYSESAPEKLRRSQTNHGADNNAAVQEVLQAVESQADTARQMGDSAVYKFYVKSAGWLTITIFVIAICVYAFCDSFPSVWLKWWAEANEKNPNSDLGKWLGVYAVLGVGAVAACLIGTWQLFIITINRSGLYFHNLLVETVSRAPMMFHSTTDTGITVNRFSQDLQLIDMELPSAALGVVMALSFGIAQFILVCVSSRYMAALLPFLLAVLYAIQHFYLRTARQLRLLDIEYKAPLYTQLMETISGVVTIRAFRWETQSTEKAIRILDTSQKPSYLLFCVQRWITFAVNMVIMMLAVILIVLTTTLREAIGPGYVGIALSNILAFSATMQATITSWVTLEIALGAVARIRSFSMQVRSEDDEARDGLAKAGLDARLVQPTPETVGERWPSQGRIELDNVTASYPSSGRVLHNITMIIEPGQKVAICGRTGSGKSSLFLSLLGLIAQDSGSITIDSVDLATLPREYLRSQIVAVPQEAYILDGTVRLNADPYHNKETLGSTDPPDSRDEQIIDVLKRVGLWEKIATRGGLDMVIDDKFLSQGQAQLMVLARAMLRRDESRVLLLDEATSSLDEATTTLIDEIVSTWFKDWTVLAIAHKLDAILDYDRVAVLDAGRLVEYDQPRELLQRPTSIFKELYLLSTNQASLSSPDSN</sequence>
<dbReference type="EMBL" id="LSBH01000002">
    <property type="protein sequence ID" value="OAQ83754.1"/>
    <property type="molecule type" value="Genomic_DNA"/>
</dbReference>
<dbReference type="SMR" id="A0A179H0T5"/>
<dbReference type="GlyCosmos" id="A0A179H0T5">
    <property type="glycosylation" value="7 sites, No reported glycans"/>
</dbReference>
<dbReference type="Proteomes" id="UP000078240">
    <property type="component" value="Unassembled WGS sequence"/>
</dbReference>
<dbReference type="GO" id="GO:0005886">
    <property type="term" value="C:plasma membrane"/>
    <property type="evidence" value="ECO:0007669"/>
    <property type="project" value="UniProtKB-SubCell"/>
</dbReference>
<dbReference type="GO" id="GO:0140359">
    <property type="term" value="F:ABC-type transporter activity"/>
    <property type="evidence" value="ECO:0007669"/>
    <property type="project" value="InterPro"/>
</dbReference>
<dbReference type="GO" id="GO:0005524">
    <property type="term" value="F:ATP binding"/>
    <property type="evidence" value="ECO:0007669"/>
    <property type="project" value="UniProtKB-KW"/>
</dbReference>
<dbReference type="GO" id="GO:0016887">
    <property type="term" value="F:ATP hydrolysis activity"/>
    <property type="evidence" value="ECO:0007669"/>
    <property type="project" value="InterPro"/>
</dbReference>
<dbReference type="CDD" id="cd18579">
    <property type="entry name" value="ABC_6TM_ABCC_D1"/>
    <property type="match status" value="1"/>
</dbReference>
<dbReference type="CDD" id="cd18580">
    <property type="entry name" value="ABC_6TM_ABCC_D2"/>
    <property type="match status" value="1"/>
</dbReference>
<dbReference type="FunFam" id="1.20.1560.10:FF:000055">
    <property type="entry name" value="ABC multidrug transporter (Eurofung)"/>
    <property type="match status" value="1"/>
</dbReference>
<dbReference type="FunFam" id="1.20.1560.10:FF:000066">
    <property type="entry name" value="ABC multidrug transporter (Eurofung)"/>
    <property type="match status" value="1"/>
</dbReference>
<dbReference type="FunFam" id="3.40.50.300:FF:002145">
    <property type="entry name" value="ABC transporter (MsbA subfamily)"/>
    <property type="match status" value="1"/>
</dbReference>
<dbReference type="Gene3D" id="1.20.1560.10">
    <property type="entry name" value="ABC transporter type 1, transmembrane domain"/>
    <property type="match status" value="2"/>
</dbReference>
<dbReference type="Gene3D" id="3.40.50.300">
    <property type="entry name" value="P-loop containing nucleotide triphosphate hydrolases"/>
    <property type="match status" value="2"/>
</dbReference>
<dbReference type="InterPro" id="IPR003593">
    <property type="entry name" value="AAA+_ATPase"/>
</dbReference>
<dbReference type="InterPro" id="IPR011527">
    <property type="entry name" value="ABC1_TM_dom"/>
</dbReference>
<dbReference type="InterPro" id="IPR036640">
    <property type="entry name" value="ABC1_TM_sf"/>
</dbReference>
<dbReference type="InterPro" id="IPR003439">
    <property type="entry name" value="ABC_transporter-like_ATP-bd"/>
</dbReference>
<dbReference type="InterPro" id="IPR017871">
    <property type="entry name" value="ABC_transporter-like_CS"/>
</dbReference>
<dbReference type="InterPro" id="IPR050173">
    <property type="entry name" value="ABC_transporter_C-like"/>
</dbReference>
<dbReference type="InterPro" id="IPR044746">
    <property type="entry name" value="ABCC_6TM_D1"/>
</dbReference>
<dbReference type="InterPro" id="IPR044726">
    <property type="entry name" value="ABCC_6TM_D2"/>
</dbReference>
<dbReference type="InterPro" id="IPR027417">
    <property type="entry name" value="P-loop_NTPase"/>
</dbReference>
<dbReference type="InterPro" id="IPR056227">
    <property type="entry name" value="TMD0_ABC"/>
</dbReference>
<dbReference type="PANTHER" id="PTHR24223:SF399">
    <property type="entry name" value="ABC TRANSPORTER ATNG"/>
    <property type="match status" value="1"/>
</dbReference>
<dbReference type="PANTHER" id="PTHR24223">
    <property type="entry name" value="ATP-BINDING CASSETTE SUB-FAMILY C"/>
    <property type="match status" value="1"/>
</dbReference>
<dbReference type="Pfam" id="PF00664">
    <property type="entry name" value="ABC_membrane"/>
    <property type="match status" value="1"/>
</dbReference>
<dbReference type="Pfam" id="PF00005">
    <property type="entry name" value="ABC_tran"/>
    <property type="match status" value="2"/>
</dbReference>
<dbReference type="Pfam" id="PF24357">
    <property type="entry name" value="TMD0_ABC"/>
    <property type="match status" value="1"/>
</dbReference>
<dbReference type="SMART" id="SM00382">
    <property type="entry name" value="AAA"/>
    <property type="match status" value="2"/>
</dbReference>
<dbReference type="SUPFAM" id="SSF90123">
    <property type="entry name" value="ABC transporter transmembrane region"/>
    <property type="match status" value="2"/>
</dbReference>
<dbReference type="SUPFAM" id="SSF52540">
    <property type="entry name" value="P-loop containing nucleoside triphosphate hydrolases"/>
    <property type="match status" value="2"/>
</dbReference>
<dbReference type="PROSITE" id="PS50929">
    <property type="entry name" value="ABC_TM1F"/>
    <property type="match status" value="2"/>
</dbReference>
<dbReference type="PROSITE" id="PS00211">
    <property type="entry name" value="ABC_TRANSPORTER_1"/>
    <property type="match status" value="2"/>
</dbReference>
<dbReference type="PROSITE" id="PS50893">
    <property type="entry name" value="ABC_TRANSPORTER_2"/>
    <property type="match status" value="2"/>
</dbReference>
<proteinExistence type="evidence at transcript level"/>
<name>LCSH_PURLI</name>
<protein>
    <recommendedName>
        <fullName evidence="7">ABC multidrug transporter lscH</fullName>
    </recommendedName>
    <alternativeName>
        <fullName evidence="7">Leucinostatins biosynthesis cluster protein H</fullName>
    </alternativeName>
</protein>